<organism>
    <name type="scientific">Aromatoleum aromaticum (strain DSM 19018 / LMG 30748 / EbN1)</name>
    <name type="common">Azoarcus sp. (strain EbN1)</name>
    <dbReference type="NCBI Taxonomy" id="76114"/>
    <lineage>
        <taxon>Bacteria</taxon>
        <taxon>Pseudomonadati</taxon>
        <taxon>Pseudomonadota</taxon>
        <taxon>Betaproteobacteria</taxon>
        <taxon>Rhodocyclales</taxon>
        <taxon>Rhodocyclaceae</taxon>
        <taxon>Aromatoleum</taxon>
    </lineage>
</organism>
<accession>Q5P082</accession>
<dbReference type="EC" id="2.7.8.7" evidence="1"/>
<dbReference type="EMBL" id="CR555306">
    <property type="protein sequence ID" value="CAI09282.1"/>
    <property type="molecule type" value="Genomic_DNA"/>
</dbReference>
<dbReference type="RefSeq" id="WP_011238952.1">
    <property type="nucleotide sequence ID" value="NC_006513.1"/>
</dbReference>
<dbReference type="SMR" id="Q5P082"/>
<dbReference type="STRING" id="76114.ebB196"/>
<dbReference type="KEGG" id="eba:ebB196"/>
<dbReference type="eggNOG" id="COG0736">
    <property type="taxonomic scope" value="Bacteria"/>
</dbReference>
<dbReference type="HOGENOM" id="CLU_089696_3_1_4"/>
<dbReference type="OrthoDB" id="517356at2"/>
<dbReference type="Proteomes" id="UP000006552">
    <property type="component" value="Chromosome"/>
</dbReference>
<dbReference type="GO" id="GO:0005737">
    <property type="term" value="C:cytoplasm"/>
    <property type="evidence" value="ECO:0007669"/>
    <property type="project" value="UniProtKB-SubCell"/>
</dbReference>
<dbReference type="GO" id="GO:0008897">
    <property type="term" value="F:holo-[acyl-carrier-protein] synthase activity"/>
    <property type="evidence" value="ECO:0007669"/>
    <property type="project" value="UniProtKB-UniRule"/>
</dbReference>
<dbReference type="GO" id="GO:0000287">
    <property type="term" value="F:magnesium ion binding"/>
    <property type="evidence" value="ECO:0007669"/>
    <property type="project" value="UniProtKB-UniRule"/>
</dbReference>
<dbReference type="GO" id="GO:0006633">
    <property type="term" value="P:fatty acid biosynthetic process"/>
    <property type="evidence" value="ECO:0007669"/>
    <property type="project" value="UniProtKB-UniRule"/>
</dbReference>
<dbReference type="Gene3D" id="3.90.470.20">
    <property type="entry name" value="4'-phosphopantetheinyl transferase domain"/>
    <property type="match status" value="1"/>
</dbReference>
<dbReference type="HAMAP" id="MF_00101">
    <property type="entry name" value="AcpS"/>
    <property type="match status" value="1"/>
</dbReference>
<dbReference type="InterPro" id="IPR008278">
    <property type="entry name" value="4-PPantetheinyl_Trfase_dom"/>
</dbReference>
<dbReference type="InterPro" id="IPR037143">
    <property type="entry name" value="4-PPantetheinyl_Trfase_dom_sf"/>
</dbReference>
<dbReference type="InterPro" id="IPR002582">
    <property type="entry name" value="ACPS"/>
</dbReference>
<dbReference type="InterPro" id="IPR004568">
    <property type="entry name" value="Ppantetheine-prot_Trfase_dom"/>
</dbReference>
<dbReference type="NCBIfam" id="TIGR00516">
    <property type="entry name" value="acpS"/>
    <property type="match status" value="1"/>
</dbReference>
<dbReference type="NCBIfam" id="TIGR00556">
    <property type="entry name" value="pantethn_trn"/>
    <property type="match status" value="1"/>
</dbReference>
<dbReference type="Pfam" id="PF01648">
    <property type="entry name" value="ACPS"/>
    <property type="match status" value="1"/>
</dbReference>
<dbReference type="SUPFAM" id="SSF56214">
    <property type="entry name" value="4'-phosphopantetheinyl transferase"/>
    <property type="match status" value="1"/>
</dbReference>
<sequence>MIHGIGTDIVQIERVQRSLDRHGARFAARILAASERDGFAASRDPARFLAKRFAAKEAFGKALGTGVAIPATLHAVAVDHDERGKPLYCYGTALAGFLAERGLSAHLSLTDEVDYVVAFALIEKR</sequence>
<gene>
    <name evidence="1" type="primary">acpS</name>
    <name type="ordered locus">AZOSEA31570</name>
    <name type="ORF">ebB196</name>
</gene>
<proteinExistence type="inferred from homology"/>
<comment type="function">
    <text evidence="1">Transfers the 4'-phosphopantetheine moiety from coenzyme A to a Ser of acyl-carrier-protein.</text>
</comment>
<comment type="catalytic activity">
    <reaction evidence="1">
        <text>apo-[ACP] + CoA = holo-[ACP] + adenosine 3',5'-bisphosphate + H(+)</text>
        <dbReference type="Rhea" id="RHEA:12068"/>
        <dbReference type="Rhea" id="RHEA-COMP:9685"/>
        <dbReference type="Rhea" id="RHEA-COMP:9690"/>
        <dbReference type="ChEBI" id="CHEBI:15378"/>
        <dbReference type="ChEBI" id="CHEBI:29999"/>
        <dbReference type="ChEBI" id="CHEBI:57287"/>
        <dbReference type="ChEBI" id="CHEBI:58343"/>
        <dbReference type="ChEBI" id="CHEBI:64479"/>
        <dbReference type="EC" id="2.7.8.7"/>
    </reaction>
</comment>
<comment type="cofactor">
    <cofactor evidence="1">
        <name>Mg(2+)</name>
        <dbReference type="ChEBI" id="CHEBI:18420"/>
    </cofactor>
</comment>
<comment type="subcellular location">
    <subcellularLocation>
        <location evidence="1">Cytoplasm</location>
    </subcellularLocation>
</comment>
<comment type="similarity">
    <text evidence="1">Belongs to the P-Pant transferase superfamily. AcpS family.</text>
</comment>
<evidence type="ECO:0000255" key="1">
    <source>
        <dbReference type="HAMAP-Rule" id="MF_00101"/>
    </source>
</evidence>
<reference key="1">
    <citation type="journal article" date="2005" name="Arch. Microbiol.">
        <title>The genome sequence of an anaerobic aromatic-degrading denitrifying bacterium, strain EbN1.</title>
        <authorList>
            <person name="Rabus R."/>
            <person name="Kube M."/>
            <person name="Heider J."/>
            <person name="Beck A."/>
            <person name="Heitmann K."/>
            <person name="Widdel F."/>
            <person name="Reinhardt R."/>
        </authorList>
    </citation>
    <scope>NUCLEOTIDE SEQUENCE [LARGE SCALE GENOMIC DNA]</scope>
    <source>
        <strain>DSM 19018 / LMG 30748 / EbN1</strain>
    </source>
</reference>
<keyword id="KW-0963">Cytoplasm</keyword>
<keyword id="KW-0275">Fatty acid biosynthesis</keyword>
<keyword id="KW-0276">Fatty acid metabolism</keyword>
<keyword id="KW-0444">Lipid biosynthesis</keyword>
<keyword id="KW-0443">Lipid metabolism</keyword>
<keyword id="KW-0460">Magnesium</keyword>
<keyword id="KW-0479">Metal-binding</keyword>
<keyword id="KW-1185">Reference proteome</keyword>
<keyword id="KW-0808">Transferase</keyword>
<name>ACPS_AROAE</name>
<protein>
    <recommendedName>
        <fullName evidence="1">Holo-[acyl-carrier-protein] synthase</fullName>
        <shortName evidence="1">Holo-ACP synthase</shortName>
        <ecNumber evidence="1">2.7.8.7</ecNumber>
    </recommendedName>
    <alternativeName>
        <fullName evidence="1">4'-phosphopantetheinyl transferase AcpS</fullName>
    </alternativeName>
</protein>
<feature type="chain" id="PRO_0000228269" description="Holo-[acyl-carrier-protein] synthase">
    <location>
        <begin position="1"/>
        <end position="125"/>
    </location>
</feature>
<feature type="binding site" evidence="1">
    <location>
        <position position="8"/>
    </location>
    <ligand>
        <name>Mg(2+)</name>
        <dbReference type="ChEBI" id="CHEBI:18420"/>
    </ligand>
</feature>
<feature type="binding site" evidence="1">
    <location>
        <position position="57"/>
    </location>
    <ligand>
        <name>Mg(2+)</name>
        <dbReference type="ChEBI" id="CHEBI:18420"/>
    </ligand>
</feature>